<feature type="chain" id="PRO_0000250128" description="3-isopropylmalate dehydrogenase">
    <location>
        <begin position="1"/>
        <end position="355"/>
    </location>
</feature>
<feature type="binding site" evidence="1">
    <location>
        <position position="90"/>
    </location>
    <ligand>
        <name>substrate</name>
    </ligand>
</feature>
<feature type="binding site" evidence="1">
    <location>
        <position position="100"/>
    </location>
    <ligand>
        <name>substrate</name>
    </ligand>
</feature>
<feature type="binding site" evidence="1">
    <location>
        <position position="128"/>
    </location>
    <ligand>
        <name>substrate</name>
    </ligand>
</feature>
<feature type="binding site" evidence="1">
    <location>
        <position position="222"/>
    </location>
    <ligand>
        <name>Mg(2+)</name>
        <dbReference type="ChEBI" id="CHEBI:18420"/>
    </ligand>
</feature>
<feature type="binding site" evidence="1">
    <location>
        <position position="222"/>
    </location>
    <ligand>
        <name>substrate</name>
    </ligand>
</feature>
<feature type="binding site" evidence="1">
    <location>
        <position position="246"/>
    </location>
    <ligand>
        <name>Mg(2+)</name>
        <dbReference type="ChEBI" id="CHEBI:18420"/>
    </ligand>
</feature>
<feature type="binding site" evidence="1">
    <location>
        <position position="250"/>
    </location>
    <ligand>
        <name>Mg(2+)</name>
        <dbReference type="ChEBI" id="CHEBI:18420"/>
    </ligand>
</feature>
<feature type="binding site" evidence="1">
    <location>
        <begin position="280"/>
        <end position="292"/>
    </location>
    <ligand>
        <name>NAD(+)</name>
        <dbReference type="ChEBI" id="CHEBI:57540"/>
    </ligand>
</feature>
<feature type="site" description="Important for catalysis" evidence="1">
    <location>
        <position position="135"/>
    </location>
</feature>
<feature type="site" description="Important for catalysis" evidence="1">
    <location>
        <position position="190"/>
    </location>
</feature>
<dbReference type="EC" id="1.1.1.85" evidence="1"/>
<dbReference type="EMBL" id="CP000352">
    <property type="protein sequence ID" value="ABF09349.1"/>
    <property type="molecule type" value="Genomic_DNA"/>
</dbReference>
<dbReference type="RefSeq" id="WP_011517061.1">
    <property type="nucleotide sequence ID" value="NC_007973.1"/>
</dbReference>
<dbReference type="SMR" id="Q1LKH7"/>
<dbReference type="STRING" id="266264.Rmet_2472"/>
<dbReference type="KEGG" id="rme:Rmet_2472"/>
<dbReference type="eggNOG" id="COG0473">
    <property type="taxonomic scope" value="Bacteria"/>
</dbReference>
<dbReference type="HOGENOM" id="CLU_031953_0_3_4"/>
<dbReference type="UniPathway" id="UPA00048">
    <property type="reaction ID" value="UER00072"/>
</dbReference>
<dbReference type="Proteomes" id="UP000002429">
    <property type="component" value="Chromosome"/>
</dbReference>
<dbReference type="GO" id="GO:0005829">
    <property type="term" value="C:cytosol"/>
    <property type="evidence" value="ECO:0007669"/>
    <property type="project" value="TreeGrafter"/>
</dbReference>
<dbReference type="GO" id="GO:0003862">
    <property type="term" value="F:3-isopropylmalate dehydrogenase activity"/>
    <property type="evidence" value="ECO:0007669"/>
    <property type="project" value="UniProtKB-UniRule"/>
</dbReference>
<dbReference type="GO" id="GO:0000287">
    <property type="term" value="F:magnesium ion binding"/>
    <property type="evidence" value="ECO:0007669"/>
    <property type="project" value="InterPro"/>
</dbReference>
<dbReference type="GO" id="GO:0051287">
    <property type="term" value="F:NAD binding"/>
    <property type="evidence" value="ECO:0007669"/>
    <property type="project" value="InterPro"/>
</dbReference>
<dbReference type="GO" id="GO:0009098">
    <property type="term" value="P:L-leucine biosynthetic process"/>
    <property type="evidence" value="ECO:0007669"/>
    <property type="project" value="UniProtKB-UniRule"/>
</dbReference>
<dbReference type="FunFam" id="3.40.718.10:FF:000028">
    <property type="entry name" value="3-isopropylmalate dehydrogenase"/>
    <property type="match status" value="1"/>
</dbReference>
<dbReference type="Gene3D" id="3.40.718.10">
    <property type="entry name" value="Isopropylmalate Dehydrogenase"/>
    <property type="match status" value="1"/>
</dbReference>
<dbReference type="HAMAP" id="MF_01033">
    <property type="entry name" value="LeuB_type1"/>
    <property type="match status" value="1"/>
</dbReference>
<dbReference type="InterPro" id="IPR019818">
    <property type="entry name" value="IsoCit/isopropylmalate_DH_CS"/>
</dbReference>
<dbReference type="InterPro" id="IPR024084">
    <property type="entry name" value="IsoPropMal-DH-like_dom"/>
</dbReference>
<dbReference type="InterPro" id="IPR004429">
    <property type="entry name" value="Isopropylmalate_DH"/>
</dbReference>
<dbReference type="NCBIfam" id="TIGR00169">
    <property type="entry name" value="leuB"/>
    <property type="match status" value="1"/>
</dbReference>
<dbReference type="PANTHER" id="PTHR42979">
    <property type="entry name" value="3-ISOPROPYLMALATE DEHYDROGENASE"/>
    <property type="match status" value="1"/>
</dbReference>
<dbReference type="PANTHER" id="PTHR42979:SF1">
    <property type="entry name" value="3-ISOPROPYLMALATE DEHYDROGENASE"/>
    <property type="match status" value="1"/>
</dbReference>
<dbReference type="Pfam" id="PF00180">
    <property type="entry name" value="Iso_dh"/>
    <property type="match status" value="1"/>
</dbReference>
<dbReference type="SMART" id="SM01329">
    <property type="entry name" value="Iso_dh"/>
    <property type="match status" value="1"/>
</dbReference>
<dbReference type="SUPFAM" id="SSF53659">
    <property type="entry name" value="Isocitrate/Isopropylmalate dehydrogenase-like"/>
    <property type="match status" value="1"/>
</dbReference>
<dbReference type="PROSITE" id="PS00470">
    <property type="entry name" value="IDH_IMDH"/>
    <property type="match status" value="1"/>
</dbReference>
<keyword id="KW-0028">Amino-acid biosynthesis</keyword>
<keyword id="KW-0100">Branched-chain amino acid biosynthesis</keyword>
<keyword id="KW-0963">Cytoplasm</keyword>
<keyword id="KW-0432">Leucine biosynthesis</keyword>
<keyword id="KW-0460">Magnesium</keyword>
<keyword id="KW-0464">Manganese</keyword>
<keyword id="KW-0479">Metal-binding</keyword>
<keyword id="KW-0520">NAD</keyword>
<keyword id="KW-0560">Oxidoreductase</keyword>
<keyword id="KW-1185">Reference proteome</keyword>
<proteinExistence type="inferred from homology"/>
<reference key="1">
    <citation type="journal article" date="2010" name="PLoS ONE">
        <title>The complete genome sequence of Cupriavidus metallidurans strain CH34, a master survivalist in harsh and anthropogenic environments.</title>
        <authorList>
            <person name="Janssen P.J."/>
            <person name="Van Houdt R."/>
            <person name="Moors H."/>
            <person name="Monsieurs P."/>
            <person name="Morin N."/>
            <person name="Michaux A."/>
            <person name="Benotmane M.A."/>
            <person name="Leys N."/>
            <person name="Vallaeys T."/>
            <person name="Lapidus A."/>
            <person name="Monchy S."/>
            <person name="Medigue C."/>
            <person name="Taghavi S."/>
            <person name="McCorkle S."/>
            <person name="Dunn J."/>
            <person name="van der Lelie D."/>
            <person name="Mergeay M."/>
        </authorList>
    </citation>
    <scope>NUCLEOTIDE SEQUENCE [LARGE SCALE GENOMIC DNA]</scope>
    <source>
        <strain>ATCC 43123 / DSM 2839 / NBRC 102507 / CH34</strain>
    </source>
</reference>
<accession>Q1LKH7</accession>
<name>LEU3_CUPMC</name>
<protein>
    <recommendedName>
        <fullName evidence="1">3-isopropylmalate dehydrogenase</fullName>
        <ecNumber evidence="1">1.1.1.85</ecNumber>
    </recommendedName>
    <alternativeName>
        <fullName evidence="1">3-IPM-DH</fullName>
    </alternativeName>
    <alternativeName>
        <fullName evidence="1">Beta-IPM dehydrogenase</fullName>
        <shortName evidence="1">IMDH</shortName>
    </alternativeName>
</protein>
<organism>
    <name type="scientific">Cupriavidus metallidurans (strain ATCC 43123 / DSM 2839 / NBRC 102507 / CH34)</name>
    <name type="common">Ralstonia metallidurans</name>
    <dbReference type="NCBI Taxonomy" id="266264"/>
    <lineage>
        <taxon>Bacteria</taxon>
        <taxon>Pseudomonadati</taxon>
        <taxon>Pseudomonadota</taxon>
        <taxon>Betaproteobacteria</taxon>
        <taxon>Burkholderiales</taxon>
        <taxon>Burkholderiaceae</taxon>
        <taxon>Cupriavidus</taxon>
    </lineage>
</organism>
<sequence>MKIAVLPGDGIGPEIVAEAVKVLNALDEKFEMETAPVGGAGYEAEGHPLPDNTLKLAKEADAILFGAVGDWKYDSLDRPLRPEQAILGLRKHLQLFANFRPAICYPELTGASSLKPELVAGLDILIVRELNGDIYFGQPRGVREAPDGLFKGAREGFDTMRYSEPEVRRIAHVAFQAAAKRGKKLCSVDKANVLETFQFWKDIVIDVSKEYPDVELSHMYVDNAAMQLVKAPKSFDVIVTGNMFGDILSDEAAMLTGSIGMLPSASLDANNKGLYEPSHGSAPDIAGKGVANPLATILSAAMMLRYSLNRAEQADRIENAVKKVLAQGYRTADIVTPGCKQVGTREMGEAVLAAL</sequence>
<evidence type="ECO:0000255" key="1">
    <source>
        <dbReference type="HAMAP-Rule" id="MF_01033"/>
    </source>
</evidence>
<comment type="function">
    <text evidence="1">Catalyzes the oxidation of 3-carboxy-2-hydroxy-4-methylpentanoate (3-isopropylmalate) to 3-carboxy-4-methyl-2-oxopentanoate. The product decarboxylates to 4-methyl-2 oxopentanoate.</text>
</comment>
<comment type="catalytic activity">
    <reaction evidence="1">
        <text>(2R,3S)-3-isopropylmalate + NAD(+) = 4-methyl-2-oxopentanoate + CO2 + NADH</text>
        <dbReference type="Rhea" id="RHEA:32271"/>
        <dbReference type="ChEBI" id="CHEBI:16526"/>
        <dbReference type="ChEBI" id="CHEBI:17865"/>
        <dbReference type="ChEBI" id="CHEBI:35121"/>
        <dbReference type="ChEBI" id="CHEBI:57540"/>
        <dbReference type="ChEBI" id="CHEBI:57945"/>
        <dbReference type="EC" id="1.1.1.85"/>
    </reaction>
</comment>
<comment type="cofactor">
    <cofactor evidence="1">
        <name>Mg(2+)</name>
        <dbReference type="ChEBI" id="CHEBI:18420"/>
    </cofactor>
    <cofactor evidence="1">
        <name>Mn(2+)</name>
        <dbReference type="ChEBI" id="CHEBI:29035"/>
    </cofactor>
    <text evidence="1">Binds 1 Mg(2+) or Mn(2+) ion per subunit.</text>
</comment>
<comment type="pathway">
    <text evidence="1">Amino-acid biosynthesis; L-leucine biosynthesis; L-leucine from 3-methyl-2-oxobutanoate: step 3/4.</text>
</comment>
<comment type="subunit">
    <text evidence="1">Homodimer.</text>
</comment>
<comment type="subcellular location">
    <subcellularLocation>
        <location evidence="1">Cytoplasm</location>
    </subcellularLocation>
</comment>
<comment type="similarity">
    <text evidence="1">Belongs to the isocitrate and isopropylmalate dehydrogenases family. LeuB type 1 subfamily.</text>
</comment>
<gene>
    <name evidence="1" type="primary">leuB</name>
    <name type="ordered locus">Rmet_2472</name>
</gene>